<dbReference type="EC" id="3.1.3.11" evidence="1"/>
<dbReference type="EMBL" id="CR954246">
    <property type="protein sequence ID" value="CAI86814.1"/>
    <property type="molecule type" value="Genomic_DNA"/>
</dbReference>
<dbReference type="SMR" id="Q3IH61"/>
<dbReference type="STRING" id="326442.PSHAa1742"/>
<dbReference type="KEGG" id="pha:PSHAa1742"/>
<dbReference type="PATRIC" id="fig|326442.8.peg.1687"/>
<dbReference type="eggNOG" id="COG0158">
    <property type="taxonomic scope" value="Bacteria"/>
</dbReference>
<dbReference type="HOGENOM" id="CLU_039977_0_0_6"/>
<dbReference type="BioCyc" id="PHAL326442:PSHA_RS08550-MONOMER"/>
<dbReference type="UniPathway" id="UPA00138"/>
<dbReference type="Proteomes" id="UP000006843">
    <property type="component" value="Chromosome I"/>
</dbReference>
<dbReference type="GO" id="GO:0005829">
    <property type="term" value="C:cytosol"/>
    <property type="evidence" value="ECO:0007669"/>
    <property type="project" value="TreeGrafter"/>
</dbReference>
<dbReference type="GO" id="GO:0042132">
    <property type="term" value="F:fructose 1,6-bisphosphate 1-phosphatase activity"/>
    <property type="evidence" value="ECO:0007669"/>
    <property type="project" value="UniProtKB-UniRule"/>
</dbReference>
<dbReference type="GO" id="GO:0000287">
    <property type="term" value="F:magnesium ion binding"/>
    <property type="evidence" value="ECO:0007669"/>
    <property type="project" value="UniProtKB-UniRule"/>
</dbReference>
<dbReference type="GO" id="GO:0030388">
    <property type="term" value="P:fructose 1,6-bisphosphate metabolic process"/>
    <property type="evidence" value="ECO:0007669"/>
    <property type="project" value="TreeGrafter"/>
</dbReference>
<dbReference type="GO" id="GO:0006002">
    <property type="term" value="P:fructose 6-phosphate metabolic process"/>
    <property type="evidence" value="ECO:0007669"/>
    <property type="project" value="TreeGrafter"/>
</dbReference>
<dbReference type="GO" id="GO:0006000">
    <property type="term" value="P:fructose metabolic process"/>
    <property type="evidence" value="ECO:0007669"/>
    <property type="project" value="TreeGrafter"/>
</dbReference>
<dbReference type="GO" id="GO:0006094">
    <property type="term" value="P:gluconeogenesis"/>
    <property type="evidence" value="ECO:0007669"/>
    <property type="project" value="UniProtKB-UniRule"/>
</dbReference>
<dbReference type="GO" id="GO:0005986">
    <property type="term" value="P:sucrose biosynthetic process"/>
    <property type="evidence" value="ECO:0007669"/>
    <property type="project" value="TreeGrafter"/>
</dbReference>
<dbReference type="CDD" id="cd00354">
    <property type="entry name" value="FBPase"/>
    <property type="match status" value="1"/>
</dbReference>
<dbReference type="Gene3D" id="3.40.190.80">
    <property type="match status" value="1"/>
</dbReference>
<dbReference type="Gene3D" id="3.30.540.10">
    <property type="entry name" value="Fructose-1,6-Bisphosphatase, subunit A, domain 1"/>
    <property type="match status" value="1"/>
</dbReference>
<dbReference type="HAMAP" id="MF_01855">
    <property type="entry name" value="FBPase_class1"/>
    <property type="match status" value="1"/>
</dbReference>
<dbReference type="InterPro" id="IPR044015">
    <property type="entry name" value="FBPase_C_dom"/>
</dbReference>
<dbReference type="InterPro" id="IPR000146">
    <property type="entry name" value="FBPase_class-1"/>
</dbReference>
<dbReference type="InterPro" id="IPR033391">
    <property type="entry name" value="FBPase_N"/>
</dbReference>
<dbReference type="InterPro" id="IPR028343">
    <property type="entry name" value="FBPtase"/>
</dbReference>
<dbReference type="InterPro" id="IPR020548">
    <property type="entry name" value="Fructose_bisphosphatase_AS"/>
</dbReference>
<dbReference type="NCBIfam" id="NF006779">
    <property type="entry name" value="PRK09293.1-3"/>
    <property type="match status" value="1"/>
</dbReference>
<dbReference type="PANTHER" id="PTHR11556">
    <property type="entry name" value="FRUCTOSE-1,6-BISPHOSPHATASE-RELATED"/>
    <property type="match status" value="1"/>
</dbReference>
<dbReference type="PANTHER" id="PTHR11556:SF35">
    <property type="entry name" value="SEDOHEPTULOSE-1,7-BISPHOSPHATASE, CHLOROPLASTIC"/>
    <property type="match status" value="1"/>
</dbReference>
<dbReference type="Pfam" id="PF00316">
    <property type="entry name" value="FBPase"/>
    <property type="match status" value="1"/>
</dbReference>
<dbReference type="Pfam" id="PF18913">
    <property type="entry name" value="FBPase_C"/>
    <property type="match status" value="1"/>
</dbReference>
<dbReference type="PIRSF" id="PIRSF500210">
    <property type="entry name" value="FBPtase"/>
    <property type="match status" value="1"/>
</dbReference>
<dbReference type="PIRSF" id="PIRSF000904">
    <property type="entry name" value="FBPtase_SBPase"/>
    <property type="match status" value="1"/>
</dbReference>
<dbReference type="PRINTS" id="PR00115">
    <property type="entry name" value="F16BPHPHTASE"/>
</dbReference>
<dbReference type="SUPFAM" id="SSF56655">
    <property type="entry name" value="Carbohydrate phosphatase"/>
    <property type="match status" value="1"/>
</dbReference>
<dbReference type="PROSITE" id="PS00124">
    <property type="entry name" value="FBPASE"/>
    <property type="match status" value="1"/>
</dbReference>
<gene>
    <name evidence="1" type="primary">fbp2</name>
    <name type="ordered locus">PSHAa1742</name>
</gene>
<sequence>MKRLNTVLKEDGVQTDLILLIRTILATSKEIAFRVSQGELAGVLGSTLNENIQGEVQKKLDVIANQLLKDILLDDNSVRTVASEEEDHAVGANPEGKFIVAFDPLDGSSNIDVNGQIGTIFTIYLARDDVPYDSDEQFNQLGANQVCAGYVLYGPSSLLVMSTGGPTRCYTLDSTHGGYLLTNNQLSVPEQSSEFAVNMANYRYWDEPTQVYFDKLLYTCKSFDKSSVRWNAAMVGDVHRILCRGGLFLYPQDNRAGNENGKIRLLYEANPLALLVENAGGKATSKGARILDIAPTNLHQRVPVVLGSIAPAEYFNSTVYNSNAKY</sequence>
<comment type="catalytic activity">
    <reaction evidence="1">
        <text>beta-D-fructose 1,6-bisphosphate + H2O = beta-D-fructose 6-phosphate + phosphate</text>
        <dbReference type="Rhea" id="RHEA:11064"/>
        <dbReference type="ChEBI" id="CHEBI:15377"/>
        <dbReference type="ChEBI" id="CHEBI:32966"/>
        <dbReference type="ChEBI" id="CHEBI:43474"/>
        <dbReference type="ChEBI" id="CHEBI:57634"/>
        <dbReference type="EC" id="3.1.3.11"/>
    </reaction>
</comment>
<comment type="cofactor">
    <cofactor evidence="1">
        <name>Mg(2+)</name>
        <dbReference type="ChEBI" id="CHEBI:18420"/>
    </cofactor>
    <text evidence="1">Binds 2 magnesium ions per subunit.</text>
</comment>
<comment type="pathway">
    <text evidence="1">Carbohydrate biosynthesis; gluconeogenesis.</text>
</comment>
<comment type="subunit">
    <text evidence="1">Homotetramer.</text>
</comment>
<comment type="subcellular location">
    <subcellularLocation>
        <location evidence="1">Cytoplasm</location>
    </subcellularLocation>
</comment>
<comment type="similarity">
    <text evidence="1">Belongs to the FBPase class 1 family.</text>
</comment>
<proteinExistence type="inferred from homology"/>
<reference key="1">
    <citation type="journal article" date="2005" name="Genome Res.">
        <title>Coping with cold: the genome of the versatile marine Antarctica bacterium Pseudoalteromonas haloplanktis TAC125.</title>
        <authorList>
            <person name="Medigue C."/>
            <person name="Krin E."/>
            <person name="Pascal G."/>
            <person name="Barbe V."/>
            <person name="Bernsel A."/>
            <person name="Bertin P.N."/>
            <person name="Cheung F."/>
            <person name="Cruveiller S."/>
            <person name="D'Amico S."/>
            <person name="Duilio A."/>
            <person name="Fang G."/>
            <person name="Feller G."/>
            <person name="Ho C."/>
            <person name="Mangenot S."/>
            <person name="Marino G."/>
            <person name="Nilsson J."/>
            <person name="Parrilli E."/>
            <person name="Rocha E.P.C."/>
            <person name="Rouy Z."/>
            <person name="Sekowska A."/>
            <person name="Tutino M.L."/>
            <person name="Vallenet D."/>
            <person name="von Heijne G."/>
            <person name="Danchin A."/>
        </authorList>
    </citation>
    <scope>NUCLEOTIDE SEQUENCE [LARGE SCALE GENOMIC DNA]</scope>
    <source>
        <strain>TAC 125</strain>
    </source>
</reference>
<feature type="chain" id="PRO_0000364638" description="Fructose-1,6-bisphosphatase class 1 2">
    <location>
        <begin position="1"/>
        <end position="326"/>
    </location>
</feature>
<feature type="binding site" evidence="1">
    <location>
        <position position="84"/>
    </location>
    <ligand>
        <name>Mg(2+)</name>
        <dbReference type="ChEBI" id="CHEBI:18420"/>
        <label>1</label>
    </ligand>
</feature>
<feature type="binding site" evidence="1">
    <location>
        <position position="103"/>
    </location>
    <ligand>
        <name>Mg(2+)</name>
        <dbReference type="ChEBI" id="CHEBI:18420"/>
        <label>1</label>
    </ligand>
</feature>
<feature type="binding site" evidence="1">
    <location>
        <position position="103"/>
    </location>
    <ligand>
        <name>Mg(2+)</name>
        <dbReference type="ChEBI" id="CHEBI:18420"/>
        <label>2</label>
    </ligand>
</feature>
<feature type="binding site" evidence="1">
    <location>
        <position position="105"/>
    </location>
    <ligand>
        <name>Mg(2+)</name>
        <dbReference type="ChEBI" id="CHEBI:18420"/>
        <label>1</label>
    </ligand>
</feature>
<feature type="binding site" evidence="1">
    <location>
        <begin position="106"/>
        <end position="109"/>
    </location>
    <ligand>
        <name>substrate</name>
    </ligand>
</feature>
<feature type="binding site" evidence="1">
    <location>
        <position position="106"/>
    </location>
    <ligand>
        <name>Mg(2+)</name>
        <dbReference type="ChEBI" id="CHEBI:18420"/>
        <label>2</label>
    </ligand>
</feature>
<feature type="binding site" evidence="1">
    <location>
        <position position="198"/>
    </location>
    <ligand>
        <name>substrate</name>
    </ligand>
</feature>
<feature type="binding site" evidence="1">
    <location>
        <position position="262"/>
    </location>
    <ligand>
        <name>substrate</name>
    </ligand>
</feature>
<feature type="binding site" evidence="1">
    <location>
        <position position="268"/>
    </location>
    <ligand>
        <name>Mg(2+)</name>
        <dbReference type="ChEBI" id="CHEBI:18420"/>
        <label>2</label>
    </ligand>
</feature>
<organism>
    <name type="scientific">Pseudoalteromonas translucida (strain TAC 125)</name>
    <dbReference type="NCBI Taxonomy" id="326442"/>
    <lineage>
        <taxon>Bacteria</taxon>
        <taxon>Pseudomonadati</taxon>
        <taxon>Pseudomonadota</taxon>
        <taxon>Gammaproteobacteria</taxon>
        <taxon>Alteromonadales</taxon>
        <taxon>Pseudoalteromonadaceae</taxon>
        <taxon>Pseudoalteromonas</taxon>
    </lineage>
</organism>
<accession>Q3IH61</accession>
<name>F16A2_PSET1</name>
<keyword id="KW-0119">Carbohydrate metabolism</keyword>
<keyword id="KW-0963">Cytoplasm</keyword>
<keyword id="KW-0378">Hydrolase</keyword>
<keyword id="KW-0460">Magnesium</keyword>
<keyword id="KW-0479">Metal-binding</keyword>
<keyword id="KW-1185">Reference proteome</keyword>
<protein>
    <recommendedName>
        <fullName evidence="1">Fructose-1,6-bisphosphatase class 1 2</fullName>
        <shortName evidence="1">FBPase class 1 2</shortName>
        <ecNumber evidence="1">3.1.3.11</ecNumber>
    </recommendedName>
    <alternativeName>
        <fullName evidence="1">D-fructose-1,6-bisphosphate 1-phosphohydrolase class 1 2</fullName>
    </alternativeName>
</protein>
<evidence type="ECO:0000255" key="1">
    <source>
        <dbReference type="HAMAP-Rule" id="MF_01855"/>
    </source>
</evidence>